<gene>
    <name evidence="1" type="primary">petB-A</name>
</gene>
<gene>
    <name evidence="1" type="primary">petB-B</name>
</gene>
<sequence length="215" mass="24090">MSKVYDWFEERLEIQAIADDITSKYVPPHVNIFYCLGGITLTCFLVQVATGFAMTFYYRPTVTEAFASVQYIMTEANFGWLIRSVHRWSASMMVLMMILHVFRVYLTGGFKKPRELTWVTGVVLAVLTASFGVTGYSLPRDQIGYWAVKIVTGVPDAIPVIGSPLVELLRGSASVGQSTLTRFYSLHTFVLPLVSAVFMLIHFLMIRKQGISGPL</sequence>
<protein>
    <recommendedName>
        <fullName evidence="1">Cytochrome b6</fullName>
    </recommendedName>
</protein>
<dbReference type="EMBL" id="DQ897681">
    <property type="protein sequence ID" value="ABI17305.1"/>
    <property type="molecule type" value="Genomic_DNA"/>
</dbReference>
<dbReference type="EMBL" id="DQ897681">
    <property type="protein sequence ID" value="ABI17335.1"/>
    <property type="molecule type" value="Genomic_DNA"/>
</dbReference>
<dbReference type="SMR" id="Q06FN8"/>
<dbReference type="GO" id="GO:0009535">
    <property type="term" value="C:chloroplast thylakoid membrane"/>
    <property type="evidence" value="ECO:0007669"/>
    <property type="project" value="UniProtKB-SubCell"/>
</dbReference>
<dbReference type="GO" id="GO:0045158">
    <property type="term" value="F:electron transporter, transferring electrons within cytochrome b6/f complex of photosystem II activity"/>
    <property type="evidence" value="ECO:0007669"/>
    <property type="project" value="UniProtKB-UniRule"/>
</dbReference>
<dbReference type="GO" id="GO:0046872">
    <property type="term" value="F:metal ion binding"/>
    <property type="evidence" value="ECO:0007669"/>
    <property type="project" value="UniProtKB-KW"/>
</dbReference>
<dbReference type="GO" id="GO:0016491">
    <property type="term" value="F:oxidoreductase activity"/>
    <property type="evidence" value="ECO:0007669"/>
    <property type="project" value="InterPro"/>
</dbReference>
<dbReference type="GO" id="GO:0015979">
    <property type="term" value="P:photosynthesis"/>
    <property type="evidence" value="ECO:0007669"/>
    <property type="project" value="UniProtKB-UniRule"/>
</dbReference>
<dbReference type="GO" id="GO:0022904">
    <property type="term" value="P:respiratory electron transport chain"/>
    <property type="evidence" value="ECO:0007669"/>
    <property type="project" value="InterPro"/>
</dbReference>
<dbReference type="CDD" id="cd00284">
    <property type="entry name" value="Cytochrome_b_N"/>
    <property type="match status" value="1"/>
</dbReference>
<dbReference type="FunFam" id="1.20.810.10:FF:000001">
    <property type="entry name" value="Cytochrome b6"/>
    <property type="match status" value="1"/>
</dbReference>
<dbReference type="Gene3D" id="1.20.810.10">
    <property type="entry name" value="Cytochrome Bc1 Complex, Chain C"/>
    <property type="match status" value="1"/>
</dbReference>
<dbReference type="HAMAP" id="MF_00633">
    <property type="entry name" value="Cytb6_f_cytb6"/>
    <property type="match status" value="1"/>
</dbReference>
<dbReference type="InterPro" id="IPR005797">
    <property type="entry name" value="Cyt_b/b6_N"/>
</dbReference>
<dbReference type="InterPro" id="IPR023530">
    <property type="entry name" value="Cyt_B6_PetB"/>
</dbReference>
<dbReference type="InterPro" id="IPR027387">
    <property type="entry name" value="Cytb/b6-like_sf"/>
</dbReference>
<dbReference type="InterPro" id="IPR048259">
    <property type="entry name" value="Cytochrome_b_N_euk/bac"/>
</dbReference>
<dbReference type="InterPro" id="IPR016174">
    <property type="entry name" value="Di-haem_cyt_TM"/>
</dbReference>
<dbReference type="NCBIfam" id="NF002990">
    <property type="entry name" value="PRK03735.1"/>
    <property type="match status" value="1"/>
</dbReference>
<dbReference type="PANTHER" id="PTHR19271">
    <property type="entry name" value="CYTOCHROME B"/>
    <property type="match status" value="1"/>
</dbReference>
<dbReference type="PANTHER" id="PTHR19271:SF16">
    <property type="entry name" value="CYTOCHROME B"/>
    <property type="match status" value="1"/>
</dbReference>
<dbReference type="Pfam" id="PF00033">
    <property type="entry name" value="Cytochrome_B"/>
    <property type="match status" value="1"/>
</dbReference>
<dbReference type="PIRSF" id="PIRSF000032">
    <property type="entry name" value="Cytochrome_b6"/>
    <property type="match status" value="1"/>
</dbReference>
<dbReference type="SUPFAM" id="SSF81342">
    <property type="entry name" value="Transmembrane di-heme cytochromes"/>
    <property type="match status" value="1"/>
</dbReference>
<dbReference type="PROSITE" id="PS51002">
    <property type="entry name" value="CYTB_NTER"/>
    <property type="match status" value="1"/>
</dbReference>
<reference key="1">
    <citation type="journal article" date="2006" name="Mol. Biol. Evol.">
        <title>The complete chloroplast genome sequence of Pelargonium x hortorum: organization and evolution of the largest and most highly rearranged chloroplast genome of land plants.</title>
        <authorList>
            <person name="Chumley T.W."/>
            <person name="Palmer J.D."/>
            <person name="Mower J.P."/>
            <person name="Fourcade H.M."/>
            <person name="Calie P.J."/>
            <person name="Boore J.L."/>
            <person name="Jansen R.K."/>
        </authorList>
    </citation>
    <scope>NUCLEOTIDE SEQUENCE [LARGE SCALE GENOMIC DNA]</scope>
    <source>
        <strain>cv. Ringo White</strain>
    </source>
</reference>
<organism>
    <name type="scientific">Pelargonium hortorum</name>
    <name type="common">Common geranium</name>
    <name type="synonym">Pelargonium inquinans x Pelargonium zonale</name>
    <dbReference type="NCBI Taxonomy" id="4031"/>
    <lineage>
        <taxon>Eukaryota</taxon>
        <taxon>Viridiplantae</taxon>
        <taxon>Streptophyta</taxon>
        <taxon>Embryophyta</taxon>
        <taxon>Tracheophyta</taxon>
        <taxon>Spermatophyta</taxon>
        <taxon>Magnoliopsida</taxon>
        <taxon>eudicotyledons</taxon>
        <taxon>Gunneridae</taxon>
        <taxon>Pentapetalae</taxon>
        <taxon>rosids</taxon>
        <taxon>malvids</taxon>
        <taxon>Geraniales</taxon>
        <taxon>Geraniaceae</taxon>
        <taxon>Pelargonium</taxon>
    </lineage>
</organism>
<accession>Q06FN8</accession>
<keyword id="KW-0150">Chloroplast</keyword>
<keyword id="KW-0249">Electron transport</keyword>
<keyword id="KW-0349">Heme</keyword>
<keyword id="KW-0408">Iron</keyword>
<keyword id="KW-0472">Membrane</keyword>
<keyword id="KW-0479">Metal-binding</keyword>
<keyword id="KW-0602">Photosynthesis</keyword>
<keyword id="KW-0934">Plastid</keyword>
<keyword id="KW-0793">Thylakoid</keyword>
<keyword id="KW-0812">Transmembrane</keyword>
<keyword id="KW-1133">Transmembrane helix</keyword>
<keyword id="KW-0813">Transport</keyword>
<evidence type="ECO:0000255" key="1">
    <source>
        <dbReference type="HAMAP-Rule" id="MF_00633"/>
    </source>
</evidence>
<geneLocation type="chloroplast"/>
<name>CYB6_PELHO</name>
<feature type="chain" id="PRO_0000275328" description="Cytochrome b6">
    <location>
        <begin position="1"/>
        <end position="215"/>
    </location>
</feature>
<feature type="transmembrane region" description="Helical" evidence="1">
    <location>
        <begin position="32"/>
        <end position="52"/>
    </location>
</feature>
<feature type="transmembrane region" description="Helical" evidence="1">
    <location>
        <begin position="90"/>
        <end position="110"/>
    </location>
</feature>
<feature type="transmembrane region" description="Helical" evidence="1">
    <location>
        <begin position="116"/>
        <end position="136"/>
    </location>
</feature>
<feature type="transmembrane region" description="Helical" evidence="1">
    <location>
        <begin position="186"/>
        <end position="206"/>
    </location>
</feature>
<feature type="binding site" description="covalent" evidence="1">
    <location>
        <position position="35"/>
    </location>
    <ligand>
        <name>heme c</name>
        <dbReference type="ChEBI" id="CHEBI:61717"/>
    </ligand>
</feature>
<feature type="binding site" description="axial binding residue" evidence="1">
    <location>
        <position position="86"/>
    </location>
    <ligand>
        <name>heme b</name>
        <dbReference type="ChEBI" id="CHEBI:60344"/>
        <label>2</label>
    </ligand>
    <ligandPart>
        <name>Fe</name>
        <dbReference type="ChEBI" id="CHEBI:18248"/>
    </ligandPart>
</feature>
<feature type="binding site" description="axial binding residue" evidence="1">
    <location>
        <position position="100"/>
    </location>
    <ligand>
        <name>heme b</name>
        <dbReference type="ChEBI" id="CHEBI:60344"/>
        <label>1</label>
    </ligand>
    <ligandPart>
        <name>Fe</name>
        <dbReference type="ChEBI" id="CHEBI:18248"/>
    </ligandPart>
</feature>
<feature type="binding site" description="axial binding residue" evidence="1">
    <location>
        <position position="187"/>
    </location>
    <ligand>
        <name>heme b</name>
        <dbReference type="ChEBI" id="CHEBI:60344"/>
        <label>2</label>
    </ligand>
    <ligandPart>
        <name>Fe</name>
        <dbReference type="ChEBI" id="CHEBI:18248"/>
    </ligandPart>
</feature>
<feature type="binding site" description="axial binding residue" evidence="1">
    <location>
        <position position="202"/>
    </location>
    <ligand>
        <name>heme b</name>
        <dbReference type="ChEBI" id="CHEBI:60344"/>
        <label>1</label>
    </ligand>
    <ligandPart>
        <name>Fe</name>
        <dbReference type="ChEBI" id="CHEBI:18248"/>
    </ligandPart>
</feature>
<proteinExistence type="inferred from homology"/>
<comment type="function">
    <text evidence="1">Component of the cytochrome b6-f complex, which mediates electron transfer between photosystem II (PSII) and photosystem I (PSI), cyclic electron flow around PSI, and state transitions.</text>
</comment>
<comment type="cofactor">
    <cofactor evidence="1">
        <name>heme b</name>
        <dbReference type="ChEBI" id="CHEBI:60344"/>
    </cofactor>
    <text evidence="1">Binds 2 heme b groups non-covalently with two histidine residues as axial ligands.</text>
</comment>
<comment type="cofactor">
    <cofactor evidence="1">
        <name>heme c</name>
        <dbReference type="ChEBI" id="CHEBI:61717"/>
    </cofactor>
    <text evidence="1">Binds one heme group covalently by a single cysteine link with no axial amino acid ligand. This heme was named heme ci.</text>
</comment>
<comment type="subunit">
    <text evidence="1">The 4 large subunits of the cytochrome b6-f complex are cytochrome b6, subunit IV (17 kDa polypeptide, PetD), cytochrome f and the Rieske protein, while the 4 small subunits are PetG, PetL, PetM and PetN. The complex functions as a dimer.</text>
</comment>
<comment type="subcellular location">
    <subcellularLocation>
        <location evidence="1">Plastid</location>
        <location evidence="1">Chloroplast thylakoid membrane</location>
        <topology evidence="1">Multi-pass membrane protein</topology>
    </subcellularLocation>
</comment>
<comment type="miscellaneous">
    <text evidence="1">Heme 1 (or BH or b566) is high-potential and absorbs at about 566 nm, and heme 2 (or BL or b562) is low-potential and absorbs at about 562 nm.</text>
</comment>
<comment type="similarity">
    <text evidence="1">Belongs to the cytochrome b family. PetB subfamily.</text>
</comment>